<protein>
    <recommendedName>
        <fullName evidence="7">Oryzalexin E synthase</fullName>
        <ecNumber evidence="4 5">1.14.14.122</ecNumber>
    </recommendedName>
    <alternativeName>
        <fullName evidence="6">Cytochrome P450 76M6</fullName>
    </alternativeName>
</protein>
<feature type="chain" id="PRO_0000430728" description="Oryzalexin E synthase">
    <location>
        <begin position="1"/>
        <end position="512"/>
    </location>
</feature>
<feature type="transmembrane region" description="Helical" evidence="2">
    <location>
        <begin position="6"/>
        <end position="26"/>
    </location>
</feature>
<feature type="binding site" description="axial binding residue" evidence="1">
    <location>
        <position position="452"/>
    </location>
    <ligand>
        <name>heme</name>
        <dbReference type="ChEBI" id="CHEBI:30413"/>
    </ligand>
    <ligandPart>
        <name>Fe</name>
        <dbReference type="ChEBI" id="CHEBI:18248"/>
    </ligandPart>
</feature>
<keyword id="KW-0349">Heme</keyword>
<keyword id="KW-0408">Iron</keyword>
<keyword id="KW-0472">Membrane</keyword>
<keyword id="KW-0479">Metal-binding</keyword>
<keyword id="KW-0503">Monooxygenase</keyword>
<keyword id="KW-0560">Oxidoreductase</keyword>
<keyword id="KW-0611">Plant defense</keyword>
<keyword id="KW-1185">Reference proteome</keyword>
<keyword id="KW-0812">Transmembrane</keyword>
<keyword id="KW-1133">Transmembrane helix</keyword>
<sequence length="512" mass="56363">MEKLKSELWMTAVATCMSLLLYLTILRRRHASGGRSLALPPGPTPLPLIGNLLCLGGIFHQTLAKLARVHGPVMTLKLGLTTAVVVSSAEAAREAYTKHDQRLAARPVPDAFRANGFSERSIVFSPSSDPQWKNLRGIHATHIFSPRALAALRGIRERKVRDIVGYIRTVAGEEMCVREVVHNGVLNLISTSFFSMDMADVRSESARGLRGLIEDIIATVAGPNVSDFFPFLRQLDLQGLRRQTGSHLGIVFGLLDDIIDRRMAETRDHPDKQRHGDFLDALISLASAGKIPRYHITYLLFDVFAAGADTMTTTVEWAMAELLRNPRVMAKVRAEVTDALGGRESFDEGDAASLTYLQCVFKEAMRLHPVGSILVPHLAVQDGVEIGGYAVPKGTTVIFNAWAIMRDPAAWESPDQFLPERFLHKEESSSPPLELRGKDYEYIPFGSGRRLCPGLPLAERAVPFILASLLHAFEWRLPDGMSPDDMDMTEKFATANVLATPLKAVPVASHTS</sequence>
<name>C76M6_ORYSJ</name>
<accession>Q6Z5I7</accession>
<accession>A0A0P0VKN1</accession>
<dbReference type="EC" id="1.14.14.122" evidence="4 5"/>
<dbReference type="EMBL" id="AP005114">
    <property type="protein sequence ID" value="BAD17279.1"/>
    <property type="molecule type" value="Genomic_DNA"/>
</dbReference>
<dbReference type="EMBL" id="AP008208">
    <property type="protein sequence ID" value="BAF09106.1"/>
    <property type="molecule type" value="Genomic_DNA"/>
</dbReference>
<dbReference type="EMBL" id="AP014958">
    <property type="protein sequence ID" value="BAS79349.1"/>
    <property type="molecule type" value="Genomic_DNA"/>
</dbReference>
<dbReference type="EMBL" id="CM000139">
    <property type="protein sequence ID" value="EAZ23517.1"/>
    <property type="molecule type" value="Genomic_DNA"/>
</dbReference>
<dbReference type="RefSeq" id="XP_015625955.1">
    <property type="nucleotide sequence ID" value="XM_015770469.1"/>
</dbReference>
<dbReference type="SMR" id="Q6Z5I7"/>
<dbReference type="FunCoup" id="Q6Z5I7">
    <property type="interactions" value="493"/>
</dbReference>
<dbReference type="STRING" id="39947.Q6Z5I7"/>
<dbReference type="PaxDb" id="39947-Q6Z5I7"/>
<dbReference type="EnsemblPlants" id="Os02t0571900-01">
    <property type="protein sequence ID" value="Os02t0571900-01"/>
    <property type="gene ID" value="Os02g0571900"/>
</dbReference>
<dbReference type="Gramene" id="Os02t0571900-01">
    <property type="protein sequence ID" value="Os02t0571900-01"/>
    <property type="gene ID" value="Os02g0571900"/>
</dbReference>
<dbReference type="KEGG" id="dosa:Os02g0571900"/>
<dbReference type="eggNOG" id="KOG0156">
    <property type="taxonomic scope" value="Eukaryota"/>
</dbReference>
<dbReference type="HOGENOM" id="CLU_001570_4_2_1"/>
<dbReference type="InParanoid" id="Q6Z5I7"/>
<dbReference type="OMA" id="DADYWID"/>
<dbReference type="OrthoDB" id="686267at2759"/>
<dbReference type="SABIO-RK" id="Q6Z5I7"/>
<dbReference type="Proteomes" id="UP000000763">
    <property type="component" value="Chromosome 2"/>
</dbReference>
<dbReference type="Proteomes" id="UP000007752">
    <property type="component" value="Chromosome 2"/>
</dbReference>
<dbReference type="Proteomes" id="UP000059680">
    <property type="component" value="Chromosome 2"/>
</dbReference>
<dbReference type="GO" id="GO:0016020">
    <property type="term" value="C:membrane"/>
    <property type="evidence" value="ECO:0000318"/>
    <property type="project" value="GO_Central"/>
</dbReference>
<dbReference type="GO" id="GO:0102597">
    <property type="term" value="F:3alpha-hydroxy-ent-sandaracopimardiene 9-beta-monooxygenase activity"/>
    <property type="evidence" value="ECO:0000314"/>
    <property type="project" value="UniProtKB"/>
</dbReference>
<dbReference type="GO" id="GO:0020037">
    <property type="term" value="F:heme binding"/>
    <property type="evidence" value="ECO:0007669"/>
    <property type="project" value="InterPro"/>
</dbReference>
<dbReference type="GO" id="GO:0005506">
    <property type="term" value="F:iron ion binding"/>
    <property type="evidence" value="ECO:0007669"/>
    <property type="project" value="InterPro"/>
</dbReference>
<dbReference type="GO" id="GO:0004497">
    <property type="term" value="F:monooxygenase activity"/>
    <property type="evidence" value="ECO:0000314"/>
    <property type="project" value="UniProtKB"/>
</dbReference>
<dbReference type="GO" id="GO:0016709">
    <property type="term" value="F:oxidoreductase activity, acting on paired donors, with incorporation or reduction of molecular oxygen, NAD(P)H as one donor, and incorporation of one atom of oxygen"/>
    <property type="evidence" value="ECO:0000318"/>
    <property type="project" value="GO_Central"/>
</dbReference>
<dbReference type="GO" id="GO:0006952">
    <property type="term" value="P:defense response"/>
    <property type="evidence" value="ECO:0007669"/>
    <property type="project" value="UniProtKB-KW"/>
</dbReference>
<dbReference type="GO" id="GO:0051502">
    <property type="term" value="P:diterpene phytoalexin biosynthetic process"/>
    <property type="evidence" value="ECO:0000314"/>
    <property type="project" value="UniProtKB"/>
</dbReference>
<dbReference type="CDD" id="cd11073">
    <property type="entry name" value="CYP76-like"/>
    <property type="match status" value="1"/>
</dbReference>
<dbReference type="FunFam" id="1.10.630.10:FF:000007">
    <property type="entry name" value="Cytochrome P450 76C4"/>
    <property type="match status" value="1"/>
</dbReference>
<dbReference type="Gene3D" id="1.10.630.10">
    <property type="entry name" value="Cytochrome P450"/>
    <property type="match status" value="1"/>
</dbReference>
<dbReference type="InterPro" id="IPR001128">
    <property type="entry name" value="Cyt_P450"/>
</dbReference>
<dbReference type="InterPro" id="IPR017972">
    <property type="entry name" value="Cyt_P450_CS"/>
</dbReference>
<dbReference type="InterPro" id="IPR002401">
    <property type="entry name" value="Cyt_P450_E_grp-I"/>
</dbReference>
<dbReference type="InterPro" id="IPR036396">
    <property type="entry name" value="Cyt_P450_sf"/>
</dbReference>
<dbReference type="PANTHER" id="PTHR47950">
    <property type="entry name" value="CYTOCHROME P450, FAMILY 76, SUBFAMILY C, POLYPEPTIDE 5-RELATED"/>
    <property type="match status" value="1"/>
</dbReference>
<dbReference type="PANTHER" id="PTHR47950:SF44">
    <property type="entry name" value="CYTOCHROME P450, FAMILY 76, SUBFAMILY C, POLYPEPTIDE 5-RELATED"/>
    <property type="match status" value="1"/>
</dbReference>
<dbReference type="Pfam" id="PF00067">
    <property type="entry name" value="p450"/>
    <property type="match status" value="1"/>
</dbReference>
<dbReference type="PRINTS" id="PR00463">
    <property type="entry name" value="EP450I"/>
</dbReference>
<dbReference type="PRINTS" id="PR00385">
    <property type="entry name" value="P450"/>
</dbReference>
<dbReference type="SUPFAM" id="SSF48264">
    <property type="entry name" value="Cytochrome P450"/>
    <property type="match status" value="1"/>
</dbReference>
<dbReference type="PROSITE" id="PS00086">
    <property type="entry name" value="CYTOCHROME_P450"/>
    <property type="match status" value="1"/>
</dbReference>
<organism>
    <name type="scientific">Oryza sativa subsp. japonica</name>
    <name type="common">Rice</name>
    <dbReference type="NCBI Taxonomy" id="39947"/>
    <lineage>
        <taxon>Eukaryota</taxon>
        <taxon>Viridiplantae</taxon>
        <taxon>Streptophyta</taxon>
        <taxon>Embryophyta</taxon>
        <taxon>Tracheophyta</taxon>
        <taxon>Spermatophyta</taxon>
        <taxon>Magnoliopsida</taxon>
        <taxon>Liliopsida</taxon>
        <taxon>Poales</taxon>
        <taxon>Poaceae</taxon>
        <taxon>BOP clade</taxon>
        <taxon>Oryzoideae</taxon>
        <taxon>Oryzeae</taxon>
        <taxon>Oryzinae</taxon>
        <taxon>Oryza</taxon>
        <taxon>Oryza sativa</taxon>
    </lineage>
</organism>
<evidence type="ECO:0000250" key="1">
    <source>
        <dbReference type="UniProtKB" id="P04798"/>
    </source>
</evidence>
<evidence type="ECO:0000255" key="2"/>
<evidence type="ECO:0000255" key="3">
    <source>
        <dbReference type="RuleBase" id="RU000461"/>
    </source>
</evidence>
<evidence type="ECO:0000269" key="4">
    <source>
    </source>
</evidence>
<evidence type="ECO:0000269" key="5">
    <source>
    </source>
</evidence>
<evidence type="ECO:0000303" key="6">
    <source>
    </source>
</evidence>
<evidence type="ECO:0000305" key="7"/>
<evidence type="ECO:0000312" key="8">
    <source>
        <dbReference type="EMBL" id="BAD17279.1"/>
    </source>
</evidence>
<evidence type="ECO:0000312" key="9">
    <source>
        <dbReference type="EMBL" id="BAF09106.1"/>
    </source>
</evidence>
<evidence type="ECO:0000312" key="10">
    <source>
        <dbReference type="EMBL" id="EAZ23517.1"/>
    </source>
</evidence>
<reference key="1">
    <citation type="journal article" date="2005" name="Nature">
        <title>The map-based sequence of the rice genome.</title>
        <authorList>
            <consortium name="International rice genome sequencing project (IRGSP)"/>
        </authorList>
    </citation>
    <scope>NUCLEOTIDE SEQUENCE [LARGE SCALE GENOMIC DNA]</scope>
    <source>
        <strain>cv. Nipponbare</strain>
    </source>
</reference>
<reference key="2">
    <citation type="journal article" date="2008" name="Nucleic Acids Res.">
        <title>The rice annotation project database (RAP-DB): 2008 update.</title>
        <authorList>
            <consortium name="The rice annotation project (RAP)"/>
        </authorList>
    </citation>
    <scope>GENOME REANNOTATION</scope>
    <source>
        <strain>cv. Nipponbare</strain>
    </source>
</reference>
<reference key="3">
    <citation type="journal article" date="2013" name="Rice">
        <title>Improvement of the Oryza sativa Nipponbare reference genome using next generation sequence and optical map data.</title>
        <authorList>
            <person name="Kawahara Y."/>
            <person name="de la Bastide M."/>
            <person name="Hamilton J.P."/>
            <person name="Kanamori H."/>
            <person name="McCombie W.R."/>
            <person name="Ouyang S."/>
            <person name="Schwartz D.C."/>
            <person name="Tanaka T."/>
            <person name="Wu J."/>
            <person name="Zhou S."/>
            <person name="Childs K.L."/>
            <person name="Davidson R.M."/>
            <person name="Lin H."/>
            <person name="Quesada-Ocampo L."/>
            <person name="Vaillancourt B."/>
            <person name="Sakai H."/>
            <person name="Lee S.S."/>
            <person name="Kim J."/>
            <person name="Numa H."/>
            <person name="Itoh T."/>
            <person name="Buell C.R."/>
            <person name="Matsumoto T."/>
        </authorList>
    </citation>
    <scope>GENOME REANNOTATION</scope>
    <source>
        <strain>cv. Nipponbare</strain>
    </source>
</reference>
<reference key="4">
    <citation type="journal article" date="2005" name="PLoS Biol.">
        <title>The genomes of Oryza sativa: a history of duplications.</title>
        <authorList>
            <person name="Yu J."/>
            <person name="Wang J."/>
            <person name="Lin W."/>
            <person name="Li S."/>
            <person name="Li H."/>
            <person name="Zhou J."/>
            <person name="Ni P."/>
            <person name="Dong W."/>
            <person name="Hu S."/>
            <person name="Zeng C."/>
            <person name="Zhang J."/>
            <person name="Zhang Y."/>
            <person name="Li R."/>
            <person name="Xu Z."/>
            <person name="Li S."/>
            <person name="Li X."/>
            <person name="Zheng H."/>
            <person name="Cong L."/>
            <person name="Lin L."/>
            <person name="Yin J."/>
            <person name="Geng J."/>
            <person name="Li G."/>
            <person name="Shi J."/>
            <person name="Liu J."/>
            <person name="Lv H."/>
            <person name="Li J."/>
            <person name="Wang J."/>
            <person name="Deng Y."/>
            <person name="Ran L."/>
            <person name="Shi X."/>
            <person name="Wang X."/>
            <person name="Wu Q."/>
            <person name="Li C."/>
            <person name="Ren X."/>
            <person name="Wang J."/>
            <person name="Wang X."/>
            <person name="Li D."/>
            <person name="Liu D."/>
            <person name="Zhang X."/>
            <person name="Ji Z."/>
            <person name="Zhao W."/>
            <person name="Sun Y."/>
            <person name="Zhang Z."/>
            <person name="Bao J."/>
            <person name="Han Y."/>
            <person name="Dong L."/>
            <person name="Ji J."/>
            <person name="Chen P."/>
            <person name="Wu S."/>
            <person name="Liu J."/>
            <person name="Xiao Y."/>
            <person name="Bu D."/>
            <person name="Tan J."/>
            <person name="Yang L."/>
            <person name="Ye C."/>
            <person name="Zhang J."/>
            <person name="Xu J."/>
            <person name="Zhou Y."/>
            <person name="Yu Y."/>
            <person name="Zhang B."/>
            <person name="Zhuang S."/>
            <person name="Wei H."/>
            <person name="Liu B."/>
            <person name="Lei M."/>
            <person name="Yu H."/>
            <person name="Li Y."/>
            <person name="Xu H."/>
            <person name="Wei S."/>
            <person name="He X."/>
            <person name="Fang L."/>
            <person name="Zhang Z."/>
            <person name="Zhang Y."/>
            <person name="Huang X."/>
            <person name="Su Z."/>
            <person name="Tong W."/>
            <person name="Li J."/>
            <person name="Tong Z."/>
            <person name="Li S."/>
            <person name="Ye J."/>
            <person name="Wang L."/>
            <person name="Fang L."/>
            <person name="Lei T."/>
            <person name="Chen C.-S."/>
            <person name="Chen H.-C."/>
            <person name="Xu Z."/>
            <person name="Li H."/>
            <person name="Huang H."/>
            <person name="Zhang F."/>
            <person name="Xu H."/>
            <person name="Li N."/>
            <person name="Zhao C."/>
            <person name="Li S."/>
            <person name="Dong L."/>
            <person name="Huang Y."/>
            <person name="Li L."/>
            <person name="Xi Y."/>
            <person name="Qi Q."/>
            <person name="Li W."/>
            <person name="Zhang B."/>
            <person name="Hu W."/>
            <person name="Zhang Y."/>
            <person name="Tian X."/>
            <person name="Jiao Y."/>
            <person name="Liang X."/>
            <person name="Jin J."/>
            <person name="Gao L."/>
            <person name="Zheng W."/>
            <person name="Hao B."/>
            <person name="Liu S.-M."/>
            <person name="Wang W."/>
            <person name="Yuan L."/>
            <person name="Cao M."/>
            <person name="McDermott J."/>
            <person name="Samudrala R."/>
            <person name="Wang J."/>
            <person name="Wong G.K.-S."/>
            <person name="Yang H."/>
        </authorList>
    </citation>
    <scope>NUCLEOTIDE SEQUENCE [LARGE SCALE GENOMIC DNA]</scope>
    <source>
        <strain>cv. Nipponbare</strain>
    </source>
</reference>
<reference key="5">
    <citation type="journal article" date="2012" name="J. Biol. Chem.">
        <title>Characterization of CYP76M5-8 indicates metabolic plasticity within a plant biosynthetic gene cluster.</title>
        <authorList>
            <person name="Wang Q."/>
            <person name="Hillwig M.L."/>
            <person name="Okada K."/>
            <person name="Yamazaki K."/>
            <person name="Wu Y."/>
            <person name="Swaminathan S."/>
            <person name="Yamane H."/>
            <person name="Peters R.J."/>
        </authorList>
    </citation>
    <scope>FUNCTION</scope>
    <scope>CATALYTIC ACTIVITY</scope>
    <scope>BIOPHYSICOCHEMICAL PROPERTIES</scope>
    <scope>INDUCTION BY METHYL JASMONATE</scope>
</reference>
<reference key="6">
    <citation type="journal article" date="2013" name="Biochem. J.">
        <title>Picking sides: distinct roles for CYP76M6 and CYP76M8 in rice oryzalexin biosynthesis.</title>
        <authorList>
            <person name="Wu Y."/>
            <person name="Wang Q."/>
            <person name="Hillwig M.L."/>
            <person name="Peters R.J."/>
        </authorList>
    </citation>
    <scope>FUNCTION</scope>
    <scope>CATALYTIC ACTIVITY</scope>
</reference>
<proteinExistence type="evidence at protein level"/>
<gene>
    <name evidence="6" type="primary">CYP76M6</name>
    <name evidence="9" type="ordered locus">Os02g0571900</name>
    <name evidence="7" type="ordered locus">LOC_Os02g36280</name>
    <name evidence="10" type="ORF">OsJ_07213</name>
    <name evidence="8" type="ORF">P0689H05.39</name>
</gene>
<comment type="function">
    <text evidence="4 5">Enzyme of the diterpenoid metabolism involved in the biosynthesis of the oryzalexin class of phytoalexins. Can use ent-sandaracopimaradien and syn-stemodene as substrates, but no activity with syn-stemoden-19-oic acid. Hydroxylates 3-alpha-hydroxy-ent-sandaracopimaradiene at C-9-beta, resulting in a 3-alpha,9-beta-diol corresponding to oryzalexins E.</text>
</comment>
<comment type="catalytic activity">
    <reaction evidence="4 5">
        <text>ent-sandaracopimaradien-3beta-ol + reduced [NADPH--hemoprotein reductase] + O2 = oryzalexin E + oxidized [NADPH--hemoprotein reductase] + H2O + H(+)</text>
        <dbReference type="Rhea" id="RHEA:41468"/>
        <dbReference type="Rhea" id="RHEA-COMP:11964"/>
        <dbReference type="Rhea" id="RHEA-COMP:11965"/>
        <dbReference type="ChEBI" id="CHEBI:15377"/>
        <dbReference type="ChEBI" id="CHEBI:15378"/>
        <dbReference type="ChEBI" id="CHEBI:15379"/>
        <dbReference type="ChEBI" id="CHEBI:57618"/>
        <dbReference type="ChEBI" id="CHEBI:58210"/>
        <dbReference type="ChEBI" id="CHEBI:78255"/>
        <dbReference type="ChEBI" id="CHEBI:78259"/>
        <dbReference type="EC" id="1.14.14.122"/>
    </reaction>
</comment>
<comment type="cofactor">
    <cofactor evidence="1">
        <name>heme</name>
        <dbReference type="ChEBI" id="CHEBI:30413"/>
    </cofactor>
</comment>
<comment type="biophysicochemical properties">
    <kinetics>
        <KM evidence="4">17 uM for ent-sandaracopimaradien</KM>
        <KM evidence="4">7 uM for syn-stemodene</KM>
        <text evidence="4">kcat is 0.046 sec(-1) with ent-sandaracopimaradien as substrate. kcat is 0.020 sec(-1) with syn-stemodene as substrate.</text>
    </kinetics>
</comment>
<comment type="subcellular location">
    <subcellularLocation>
        <location evidence="2">Membrane</location>
        <topology evidence="2">Single-pass membrane protein</topology>
    </subcellularLocation>
</comment>
<comment type="induction">
    <text evidence="4">Up-regulated by methyl jasmonate.</text>
</comment>
<comment type="similarity">
    <text evidence="3">Belongs to the cytochrome P450 family.</text>
</comment>